<feature type="chain" id="PRO_1000058443" description="Glycerol kinase">
    <location>
        <begin position="1"/>
        <end position="504"/>
    </location>
</feature>
<feature type="binding site" evidence="1">
    <location>
        <position position="12"/>
    </location>
    <ligand>
        <name>ADP</name>
        <dbReference type="ChEBI" id="CHEBI:456216"/>
    </ligand>
</feature>
<feature type="binding site" evidence="1">
    <location>
        <position position="12"/>
    </location>
    <ligand>
        <name>ATP</name>
        <dbReference type="ChEBI" id="CHEBI:30616"/>
    </ligand>
</feature>
<feature type="binding site" evidence="1">
    <location>
        <position position="12"/>
    </location>
    <ligand>
        <name>sn-glycerol 3-phosphate</name>
        <dbReference type="ChEBI" id="CHEBI:57597"/>
    </ligand>
</feature>
<feature type="binding site" evidence="1">
    <location>
        <position position="13"/>
    </location>
    <ligand>
        <name>ATP</name>
        <dbReference type="ChEBI" id="CHEBI:30616"/>
    </ligand>
</feature>
<feature type="binding site" evidence="1">
    <location>
        <position position="14"/>
    </location>
    <ligand>
        <name>ATP</name>
        <dbReference type="ChEBI" id="CHEBI:30616"/>
    </ligand>
</feature>
<feature type="binding site" evidence="1">
    <location>
        <position position="16"/>
    </location>
    <ligand>
        <name>ADP</name>
        <dbReference type="ChEBI" id="CHEBI:456216"/>
    </ligand>
</feature>
<feature type="binding site" evidence="1">
    <location>
        <position position="82"/>
    </location>
    <ligand>
        <name>glycerol</name>
        <dbReference type="ChEBI" id="CHEBI:17754"/>
    </ligand>
</feature>
<feature type="binding site" evidence="1">
    <location>
        <position position="82"/>
    </location>
    <ligand>
        <name>sn-glycerol 3-phosphate</name>
        <dbReference type="ChEBI" id="CHEBI:57597"/>
    </ligand>
</feature>
<feature type="binding site" evidence="1">
    <location>
        <position position="83"/>
    </location>
    <ligand>
        <name>glycerol</name>
        <dbReference type="ChEBI" id="CHEBI:17754"/>
    </ligand>
</feature>
<feature type="binding site" evidence="1">
    <location>
        <position position="83"/>
    </location>
    <ligand>
        <name>sn-glycerol 3-phosphate</name>
        <dbReference type="ChEBI" id="CHEBI:57597"/>
    </ligand>
</feature>
<feature type="binding site" evidence="1">
    <location>
        <position position="134"/>
    </location>
    <ligand>
        <name>glycerol</name>
        <dbReference type="ChEBI" id="CHEBI:17754"/>
    </ligand>
</feature>
<feature type="binding site" evidence="1">
    <location>
        <position position="134"/>
    </location>
    <ligand>
        <name>sn-glycerol 3-phosphate</name>
        <dbReference type="ChEBI" id="CHEBI:57597"/>
    </ligand>
</feature>
<feature type="binding site" evidence="1">
    <location>
        <position position="244"/>
    </location>
    <ligand>
        <name>glycerol</name>
        <dbReference type="ChEBI" id="CHEBI:17754"/>
    </ligand>
</feature>
<feature type="binding site" evidence="1">
    <location>
        <position position="244"/>
    </location>
    <ligand>
        <name>sn-glycerol 3-phosphate</name>
        <dbReference type="ChEBI" id="CHEBI:57597"/>
    </ligand>
</feature>
<feature type="binding site" evidence="1">
    <location>
        <position position="245"/>
    </location>
    <ligand>
        <name>glycerol</name>
        <dbReference type="ChEBI" id="CHEBI:17754"/>
    </ligand>
</feature>
<feature type="binding site" evidence="1">
    <location>
        <position position="266"/>
    </location>
    <ligand>
        <name>ADP</name>
        <dbReference type="ChEBI" id="CHEBI:456216"/>
    </ligand>
</feature>
<feature type="binding site" evidence="1">
    <location>
        <position position="266"/>
    </location>
    <ligand>
        <name>ATP</name>
        <dbReference type="ChEBI" id="CHEBI:30616"/>
    </ligand>
</feature>
<feature type="binding site" evidence="1">
    <location>
        <position position="309"/>
    </location>
    <ligand>
        <name>ADP</name>
        <dbReference type="ChEBI" id="CHEBI:456216"/>
    </ligand>
</feature>
<feature type="binding site" evidence="1">
    <location>
        <position position="309"/>
    </location>
    <ligand>
        <name>ATP</name>
        <dbReference type="ChEBI" id="CHEBI:30616"/>
    </ligand>
</feature>
<feature type="binding site" evidence="1">
    <location>
        <position position="313"/>
    </location>
    <ligand>
        <name>ATP</name>
        <dbReference type="ChEBI" id="CHEBI:30616"/>
    </ligand>
</feature>
<feature type="binding site" evidence="1">
    <location>
        <position position="410"/>
    </location>
    <ligand>
        <name>ADP</name>
        <dbReference type="ChEBI" id="CHEBI:456216"/>
    </ligand>
</feature>
<feature type="binding site" evidence="1">
    <location>
        <position position="410"/>
    </location>
    <ligand>
        <name>ATP</name>
        <dbReference type="ChEBI" id="CHEBI:30616"/>
    </ligand>
</feature>
<feature type="binding site" evidence="1">
    <location>
        <position position="414"/>
    </location>
    <ligand>
        <name>ADP</name>
        <dbReference type="ChEBI" id="CHEBI:456216"/>
    </ligand>
</feature>
<organism>
    <name type="scientific">Alkaliphilus oremlandii (strain OhILAs)</name>
    <name type="common">Clostridium oremlandii (strain OhILAs)</name>
    <dbReference type="NCBI Taxonomy" id="350688"/>
    <lineage>
        <taxon>Bacteria</taxon>
        <taxon>Bacillati</taxon>
        <taxon>Bacillota</taxon>
        <taxon>Clostridia</taxon>
        <taxon>Peptostreptococcales</taxon>
        <taxon>Natronincolaceae</taxon>
        <taxon>Alkaliphilus</taxon>
    </lineage>
</organism>
<proteinExistence type="inferred from homology"/>
<gene>
    <name evidence="1" type="primary">glpK</name>
    <name type="ordered locus">Clos_1002</name>
</gene>
<comment type="function">
    <text evidence="1">Key enzyme in the regulation of glycerol uptake and metabolism. Catalyzes the phosphorylation of glycerol to yield sn-glycerol 3-phosphate.</text>
</comment>
<comment type="catalytic activity">
    <reaction evidence="1">
        <text>glycerol + ATP = sn-glycerol 3-phosphate + ADP + H(+)</text>
        <dbReference type="Rhea" id="RHEA:21644"/>
        <dbReference type="ChEBI" id="CHEBI:15378"/>
        <dbReference type="ChEBI" id="CHEBI:17754"/>
        <dbReference type="ChEBI" id="CHEBI:30616"/>
        <dbReference type="ChEBI" id="CHEBI:57597"/>
        <dbReference type="ChEBI" id="CHEBI:456216"/>
        <dbReference type="EC" id="2.7.1.30"/>
    </reaction>
</comment>
<comment type="activity regulation">
    <text evidence="1">Activated by phosphorylation and inhibited by fructose 1,6-bisphosphate (FBP).</text>
</comment>
<comment type="pathway">
    <text evidence="1">Polyol metabolism; glycerol degradation via glycerol kinase pathway; sn-glycerol 3-phosphate from glycerol: step 1/1.</text>
</comment>
<comment type="subunit">
    <text evidence="1">Homotetramer and homodimer (in equilibrium).</text>
</comment>
<comment type="similarity">
    <text evidence="1">Belongs to the FGGY kinase family.</text>
</comment>
<evidence type="ECO:0000255" key="1">
    <source>
        <dbReference type="HAMAP-Rule" id="MF_00186"/>
    </source>
</evidence>
<sequence length="504" mass="56167">MKKYVMALDQGTTSSRAILFDYEGKIVATSQKEFTQIYPKAGWVEHDPMEIWGTQSGVAREVLERMAISPQDIAAIGITNQRETTIVWDKNTGKPVYNAIVWQCRRTAAICDELKTQGMADYIRENTGLVLDAYFSGTKIKWILDHVEGAKEKAEKGELLFGTVDSWLIWNLTRGKVHVTDYSNASRTMLYNIKQLKWDDKILKALEIPKSMLPEVKESSAIYGYTDHQTFGGADIPIAGAAGDQQAALFGQGCFKEGMGKNTYGTGCFMLMNTGDQFVQSKNGLLTTLAWGIDGKVEYALEGSIFVAGASVQWLRDELKIIRDAEDTEYLAKKVPNSNGVYVVPAFTGMGAPYWDMYARGAIVGLTRGAKAEHIIRATLESIAYQTRDVLEAMEQDSGIQLKSLKVDGGAAMNNFLMQFQADILSVPVDRPKITETTALGAAYLAGLAVGFWKDKNEIESKWSVDTVFEPGMDHEEKERLYKGWKRAVNRALKWEEENELDVK</sequence>
<reference key="1">
    <citation type="submission" date="2007-10" db="EMBL/GenBank/DDBJ databases">
        <title>Complete genome of Alkaliphilus oremlandii OhILAs.</title>
        <authorList>
            <person name="Copeland A."/>
            <person name="Lucas S."/>
            <person name="Lapidus A."/>
            <person name="Barry K."/>
            <person name="Detter J.C."/>
            <person name="Glavina del Rio T."/>
            <person name="Hammon N."/>
            <person name="Israni S."/>
            <person name="Dalin E."/>
            <person name="Tice H."/>
            <person name="Pitluck S."/>
            <person name="Chain P."/>
            <person name="Malfatti S."/>
            <person name="Shin M."/>
            <person name="Vergez L."/>
            <person name="Schmutz J."/>
            <person name="Larimer F."/>
            <person name="Land M."/>
            <person name="Hauser L."/>
            <person name="Kyrpides N."/>
            <person name="Mikhailova N."/>
            <person name="Stolz J.F."/>
            <person name="Dawson A."/>
            <person name="Fisher E."/>
            <person name="Crable B."/>
            <person name="Perera E."/>
            <person name="Lisak J."/>
            <person name="Ranganathan M."/>
            <person name="Basu P."/>
            <person name="Richardson P."/>
        </authorList>
    </citation>
    <scope>NUCLEOTIDE SEQUENCE [LARGE SCALE GENOMIC DNA]</scope>
    <source>
        <strain>OhILAs</strain>
    </source>
</reference>
<name>GLPK_ALKOO</name>
<dbReference type="EC" id="2.7.1.30" evidence="1"/>
<dbReference type="EMBL" id="CP000853">
    <property type="protein sequence ID" value="ABW18549.1"/>
    <property type="molecule type" value="Genomic_DNA"/>
</dbReference>
<dbReference type="RefSeq" id="WP_012158861.1">
    <property type="nucleotide sequence ID" value="NC_009922.1"/>
</dbReference>
<dbReference type="SMR" id="A8MG11"/>
<dbReference type="STRING" id="350688.Clos_1002"/>
<dbReference type="KEGG" id="aoe:Clos_1002"/>
<dbReference type="eggNOG" id="COG0554">
    <property type="taxonomic scope" value="Bacteria"/>
</dbReference>
<dbReference type="HOGENOM" id="CLU_009281_2_3_9"/>
<dbReference type="OrthoDB" id="9805576at2"/>
<dbReference type="UniPathway" id="UPA00618">
    <property type="reaction ID" value="UER00672"/>
</dbReference>
<dbReference type="Proteomes" id="UP000000269">
    <property type="component" value="Chromosome"/>
</dbReference>
<dbReference type="GO" id="GO:0005829">
    <property type="term" value="C:cytosol"/>
    <property type="evidence" value="ECO:0007669"/>
    <property type="project" value="TreeGrafter"/>
</dbReference>
<dbReference type="GO" id="GO:0005524">
    <property type="term" value="F:ATP binding"/>
    <property type="evidence" value="ECO:0007669"/>
    <property type="project" value="UniProtKB-UniRule"/>
</dbReference>
<dbReference type="GO" id="GO:0004370">
    <property type="term" value="F:glycerol kinase activity"/>
    <property type="evidence" value="ECO:0000250"/>
    <property type="project" value="UniProtKB"/>
</dbReference>
<dbReference type="GO" id="GO:0019563">
    <property type="term" value="P:glycerol catabolic process"/>
    <property type="evidence" value="ECO:0007669"/>
    <property type="project" value="UniProtKB-UniRule"/>
</dbReference>
<dbReference type="GO" id="GO:0006071">
    <property type="term" value="P:glycerol metabolic process"/>
    <property type="evidence" value="ECO:0000250"/>
    <property type="project" value="UniProtKB"/>
</dbReference>
<dbReference type="GO" id="GO:0006072">
    <property type="term" value="P:glycerol-3-phosphate metabolic process"/>
    <property type="evidence" value="ECO:0007669"/>
    <property type="project" value="InterPro"/>
</dbReference>
<dbReference type="CDD" id="cd07786">
    <property type="entry name" value="FGGY_EcGK_like"/>
    <property type="match status" value="1"/>
</dbReference>
<dbReference type="FunFam" id="3.30.420.40:FF:000007">
    <property type="entry name" value="Glycerol kinase"/>
    <property type="match status" value="1"/>
</dbReference>
<dbReference type="FunFam" id="3.30.420.40:FF:000008">
    <property type="entry name" value="Glycerol kinase"/>
    <property type="match status" value="1"/>
</dbReference>
<dbReference type="Gene3D" id="3.30.420.40">
    <property type="match status" value="2"/>
</dbReference>
<dbReference type="HAMAP" id="MF_00186">
    <property type="entry name" value="Glycerol_kin"/>
    <property type="match status" value="1"/>
</dbReference>
<dbReference type="InterPro" id="IPR043129">
    <property type="entry name" value="ATPase_NBD"/>
</dbReference>
<dbReference type="InterPro" id="IPR000577">
    <property type="entry name" value="Carb_kinase_FGGY"/>
</dbReference>
<dbReference type="InterPro" id="IPR018483">
    <property type="entry name" value="Carb_kinase_FGGY_CS"/>
</dbReference>
<dbReference type="InterPro" id="IPR018485">
    <property type="entry name" value="FGGY_C"/>
</dbReference>
<dbReference type="InterPro" id="IPR018484">
    <property type="entry name" value="FGGY_N"/>
</dbReference>
<dbReference type="InterPro" id="IPR005999">
    <property type="entry name" value="Glycerol_kin"/>
</dbReference>
<dbReference type="NCBIfam" id="TIGR01311">
    <property type="entry name" value="glycerol_kin"/>
    <property type="match status" value="1"/>
</dbReference>
<dbReference type="NCBIfam" id="NF000756">
    <property type="entry name" value="PRK00047.1"/>
    <property type="match status" value="1"/>
</dbReference>
<dbReference type="PANTHER" id="PTHR10196:SF69">
    <property type="entry name" value="GLYCEROL KINASE"/>
    <property type="match status" value="1"/>
</dbReference>
<dbReference type="PANTHER" id="PTHR10196">
    <property type="entry name" value="SUGAR KINASE"/>
    <property type="match status" value="1"/>
</dbReference>
<dbReference type="Pfam" id="PF02782">
    <property type="entry name" value="FGGY_C"/>
    <property type="match status" value="1"/>
</dbReference>
<dbReference type="Pfam" id="PF00370">
    <property type="entry name" value="FGGY_N"/>
    <property type="match status" value="1"/>
</dbReference>
<dbReference type="PIRSF" id="PIRSF000538">
    <property type="entry name" value="GlpK"/>
    <property type="match status" value="1"/>
</dbReference>
<dbReference type="SUPFAM" id="SSF53067">
    <property type="entry name" value="Actin-like ATPase domain"/>
    <property type="match status" value="2"/>
</dbReference>
<dbReference type="PROSITE" id="PS00933">
    <property type="entry name" value="FGGY_KINASES_1"/>
    <property type="match status" value="1"/>
</dbReference>
<dbReference type="PROSITE" id="PS00445">
    <property type="entry name" value="FGGY_KINASES_2"/>
    <property type="match status" value="1"/>
</dbReference>
<protein>
    <recommendedName>
        <fullName evidence="1">Glycerol kinase</fullName>
        <ecNumber evidence="1">2.7.1.30</ecNumber>
    </recommendedName>
    <alternativeName>
        <fullName evidence="1">ATP:glycerol 3-phosphotransferase</fullName>
    </alternativeName>
    <alternativeName>
        <fullName evidence="1">Glycerokinase</fullName>
        <shortName evidence="1">GK</shortName>
    </alternativeName>
</protein>
<accession>A8MG11</accession>
<keyword id="KW-0067">ATP-binding</keyword>
<keyword id="KW-0319">Glycerol metabolism</keyword>
<keyword id="KW-0418">Kinase</keyword>
<keyword id="KW-0547">Nucleotide-binding</keyword>
<keyword id="KW-1185">Reference proteome</keyword>
<keyword id="KW-0808">Transferase</keyword>